<protein>
    <recommendedName>
        <fullName evidence="1">Large ribosomal subunit protein uL1</fullName>
    </recommendedName>
    <alternativeName>
        <fullName evidence="2">50S ribosomal protein L1</fullName>
    </alternativeName>
</protein>
<gene>
    <name evidence="1" type="primary">rplA</name>
    <name type="ordered locus">CLM_3959</name>
</gene>
<comment type="function">
    <text evidence="1">Binds directly to 23S rRNA. The L1 stalk is quite mobile in the ribosome, and is involved in E site tRNA release.</text>
</comment>
<comment type="function">
    <text evidence="1">Protein L1 is also a translational repressor protein, it controls the translation of the L11 operon by binding to its mRNA.</text>
</comment>
<comment type="subunit">
    <text evidence="1">Part of the 50S ribosomal subunit.</text>
</comment>
<comment type="similarity">
    <text evidence="1">Belongs to the universal ribosomal protein uL1 family.</text>
</comment>
<reference key="1">
    <citation type="submission" date="2008-10" db="EMBL/GenBank/DDBJ databases">
        <title>Genome sequence of Clostridium botulinum A2 Kyoto.</title>
        <authorList>
            <person name="Shrivastava S."/>
            <person name="Brinkac L.M."/>
            <person name="Brown J.L."/>
            <person name="Bruce D."/>
            <person name="Detter C.C."/>
            <person name="Johnson E.A."/>
            <person name="Munk C.A."/>
            <person name="Smith L.A."/>
            <person name="Smith T.J."/>
            <person name="Sutton G."/>
            <person name="Brettin T.S."/>
        </authorList>
    </citation>
    <scope>NUCLEOTIDE SEQUENCE [LARGE SCALE GENOMIC DNA]</scope>
    <source>
        <strain>Kyoto / Type A2</strain>
    </source>
</reference>
<feature type="chain" id="PRO_1000165671" description="Large ribosomal subunit protein uL1">
    <location>
        <begin position="1"/>
        <end position="229"/>
    </location>
</feature>
<accession>C1FMW2</accession>
<organism>
    <name type="scientific">Clostridium botulinum (strain Kyoto / Type A2)</name>
    <dbReference type="NCBI Taxonomy" id="536232"/>
    <lineage>
        <taxon>Bacteria</taxon>
        <taxon>Bacillati</taxon>
        <taxon>Bacillota</taxon>
        <taxon>Clostridia</taxon>
        <taxon>Eubacteriales</taxon>
        <taxon>Clostridiaceae</taxon>
        <taxon>Clostridium</taxon>
    </lineage>
</organism>
<keyword id="KW-0678">Repressor</keyword>
<keyword id="KW-0687">Ribonucleoprotein</keyword>
<keyword id="KW-0689">Ribosomal protein</keyword>
<keyword id="KW-0694">RNA-binding</keyword>
<keyword id="KW-0699">rRNA-binding</keyword>
<keyword id="KW-0810">Translation regulation</keyword>
<keyword id="KW-0820">tRNA-binding</keyword>
<sequence length="229" mass="24644">MGKKYTESVKLVDKNTLYTVQEAIELVTKTSKAKFDETVELAVRLGVDPRHADQQVRGAVVLPHGTGKTVRVLVFAKGDKVNEAQEAGADFVGAEELVEKIQKENWFDFDVVVATPDMMGVVGRLGRVLGPKGLMPNPKSGTVTFDVAKAIADIKAGKVEYRVDKTAIIHVPIGKSSFGEEKLSDNFHVLMEAVVKAKPAAAKGQYIKSVAISSTMGPGIKINPGKVLE</sequence>
<dbReference type="EMBL" id="CP001581">
    <property type="protein sequence ID" value="ACO85530.1"/>
    <property type="molecule type" value="Genomic_DNA"/>
</dbReference>
<dbReference type="RefSeq" id="WP_003357362.1">
    <property type="nucleotide sequence ID" value="NC_012563.1"/>
</dbReference>
<dbReference type="SMR" id="C1FMW2"/>
<dbReference type="GeneID" id="5186180"/>
<dbReference type="KEGG" id="cby:CLM_3959"/>
<dbReference type="eggNOG" id="COG0081">
    <property type="taxonomic scope" value="Bacteria"/>
</dbReference>
<dbReference type="HOGENOM" id="CLU_062853_0_0_9"/>
<dbReference type="Proteomes" id="UP000001374">
    <property type="component" value="Chromosome"/>
</dbReference>
<dbReference type="GO" id="GO:0015934">
    <property type="term" value="C:large ribosomal subunit"/>
    <property type="evidence" value="ECO:0007669"/>
    <property type="project" value="InterPro"/>
</dbReference>
<dbReference type="GO" id="GO:0019843">
    <property type="term" value="F:rRNA binding"/>
    <property type="evidence" value="ECO:0007669"/>
    <property type="project" value="UniProtKB-UniRule"/>
</dbReference>
<dbReference type="GO" id="GO:0003735">
    <property type="term" value="F:structural constituent of ribosome"/>
    <property type="evidence" value="ECO:0007669"/>
    <property type="project" value="InterPro"/>
</dbReference>
<dbReference type="GO" id="GO:0000049">
    <property type="term" value="F:tRNA binding"/>
    <property type="evidence" value="ECO:0007669"/>
    <property type="project" value="UniProtKB-KW"/>
</dbReference>
<dbReference type="GO" id="GO:0006417">
    <property type="term" value="P:regulation of translation"/>
    <property type="evidence" value="ECO:0007669"/>
    <property type="project" value="UniProtKB-KW"/>
</dbReference>
<dbReference type="GO" id="GO:0006412">
    <property type="term" value="P:translation"/>
    <property type="evidence" value="ECO:0007669"/>
    <property type="project" value="UniProtKB-UniRule"/>
</dbReference>
<dbReference type="CDD" id="cd00403">
    <property type="entry name" value="Ribosomal_L1"/>
    <property type="match status" value="1"/>
</dbReference>
<dbReference type="FunFam" id="3.40.50.790:FF:000001">
    <property type="entry name" value="50S ribosomal protein L1"/>
    <property type="match status" value="1"/>
</dbReference>
<dbReference type="Gene3D" id="3.30.190.20">
    <property type="match status" value="1"/>
</dbReference>
<dbReference type="Gene3D" id="3.40.50.790">
    <property type="match status" value="1"/>
</dbReference>
<dbReference type="HAMAP" id="MF_01318_B">
    <property type="entry name" value="Ribosomal_uL1_B"/>
    <property type="match status" value="1"/>
</dbReference>
<dbReference type="InterPro" id="IPR005878">
    <property type="entry name" value="Ribosom_uL1_bac-type"/>
</dbReference>
<dbReference type="InterPro" id="IPR002143">
    <property type="entry name" value="Ribosomal_uL1"/>
</dbReference>
<dbReference type="InterPro" id="IPR023674">
    <property type="entry name" value="Ribosomal_uL1-like"/>
</dbReference>
<dbReference type="InterPro" id="IPR028364">
    <property type="entry name" value="Ribosomal_uL1/biogenesis"/>
</dbReference>
<dbReference type="InterPro" id="IPR016095">
    <property type="entry name" value="Ribosomal_uL1_3-a/b-sand"/>
</dbReference>
<dbReference type="InterPro" id="IPR023673">
    <property type="entry name" value="Ribosomal_uL1_CS"/>
</dbReference>
<dbReference type="NCBIfam" id="TIGR01169">
    <property type="entry name" value="rplA_bact"/>
    <property type="match status" value="1"/>
</dbReference>
<dbReference type="PANTHER" id="PTHR36427">
    <property type="entry name" value="54S RIBOSOMAL PROTEIN L1, MITOCHONDRIAL"/>
    <property type="match status" value="1"/>
</dbReference>
<dbReference type="PANTHER" id="PTHR36427:SF3">
    <property type="entry name" value="LARGE RIBOSOMAL SUBUNIT PROTEIN UL1M"/>
    <property type="match status" value="1"/>
</dbReference>
<dbReference type="Pfam" id="PF00687">
    <property type="entry name" value="Ribosomal_L1"/>
    <property type="match status" value="1"/>
</dbReference>
<dbReference type="PIRSF" id="PIRSF002155">
    <property type="entry name" value="Ribosomal_L1"/>
    <property type="match status" value="1"/>
</dbReference>
<dbReference type="SUPFAM" id="SSF56808">
    <property type="entry name" value="Ribosomal protein L1"/>
    <property type="match status" value="1"/>
</dbReference>
<dbReference type="PROSITE" id="PS01199">
    <property type="entry name" value="RIBOSOMAL_L1"/>
    <property type="match status" value="1"/>
</dbReference>
<proteinExistence type="inferred from homology"/>
<name>RL1_CLOBJ</name>
<evidence type="ECO:0000255" key="1">
    <source>
        <dbReference type="HAMAP-Rule" id="MF_01318"/>
    </source>
</evidence>
<evidence type="ECO:0000305" key="2"/>